<accession>P05363</accession>
<feature type="chain" id="PRO_0000069890" description="Substance-K receptor">
    <location>
        <begin position="1"/>
        <end position="384"/>
    </location>
</feature>
<feature type="topological domain" description="Extracellular" evidence="1">
    <location>
        <begin position="1"/>
        <end position="32"/>
    </location>
</feature>
<feature type="transmembrane region" description="Helical; Name=1" evidence="1">
    <location>
        <begin position="33"/>
        <end position="56"/>
    </location>
</feature>
<feature type="topological domain" description="Cytoplasmic" evidence="1">
    <location>
        <begin position="57"/>
        <end position="69"/>
    </location>
</feature>
<feature type="transmembrane region" description="Helical; Name=2" evidence="1">
    <location>
        <begin position="70"/>
        <end position="90"/>
    </location>
</feature>
<feature type="topological domain" description="Extracellular" evidence="1">
    <location>
        <begin position="91"/>
        <end position="107"/>
    </location>
</feature>
<feature type="transmembrane region" description="Helical; Name=3" evidence="1">
    <location>
        <begin position="108"/>
        <end position="129"/>
    </location>
</feature>
<feature type="topological domain" description="Cytoplasmic" evidence="1">
    <location>
        <begin position="130"/>
        <end position="149"/>
    </location>
</feature>
<feature type="transmembrane region" description="Helical; Name=4" evidence="1">
    <location>
        <begin position="150"/>
        <end position="170"/>
    </location>
</feature>
<feature type="topological domain" description="Extracellular" evidence="1">
    <location>
        <begin position="171"/>
        <end position="196"/>
    </location>
</feature>
<feature type="transmembrane region" description="Helical; Name=5" evidence="1">
    <location>
        <begin position="197"/>
        <end position="218"/>
    </location>
</feature>
<feature type="topological domain" description="Cytoplasmic" evidence="1">
    <location>
        <begin position="219"/>
        <end position="251"/>
    </location>
</feature>
<feature type="transmembrane region" description="Helical; Name=6" evidence="1">
    <location>
        <begin position="252"/>
        <end position="272"/>
    </location>
</feature>
<feature type="topological domain" description="Extracellular" evidence="1">
    <location>
        <begin position="273"/>
        <end position="290"/>
    </location>
</feature>
<feature type="transmembrane region" description="Helical; Name=7" evidence="1">
    <location>
        <begin position="291"/>
        <end position="310"/>
    </location>
</feature>
<feature type="topological domain" description="Cytoplasmic" evidence="1">
    <location>
        <begin position="311"/>
        <end position="384"/>
    </location>
</feature>
<feature type="lipid moiety-binding region" description="S-palmitoyl cysteine" evidence="1">
    <location>
        <position position="324"/>
    </location>
</feature>
<feature type="glycosylation site" description="N-linked (GlcNAc...) asparagine" evidence="1">
    <location>
        <position position="11"/>
    </location>
</feature>
<feature type="glycosylation site" description="N-linked (GlcNAc...) asparagine" evidence="1">
    <location>
        <position position="19"/>
    </location>
</feature>
<feature type="disulfide bond" evidence="2">
    <location>
        <begin position="106"/>
        <end position="181"/>
    </location>
</feature>
<sequence>MGACVVMTDINISSGLDSNATGITAFSMPGWQLALWTAAYLALVLVAVMGNATVIWIILAHQRMRTVTNYFIVNLALADLCMAAFNAAFNFVYASHNIWYFGRAFCYFQNLFPITAMFVSIYSMTAIAADRYMAIVHPFQPRLSAPGTRAVIAGIWLVALALAFPQCFYSTITTDEGATKCVVAWPEDSGGKMLLLYHLIVIALIYFLPLVVMFVAYSVIGLTLWRRSVPGHQAHGANLRHLQAKKKFVKTMVLVVVTFAICWLPYHLYFILGTFQEDIYCHKFIQQVYLALFWLAMSSTMYNPIIYCCLNHRFRSGFRLAFRCCPWVTPTEEDKMELTYTPSLSTRVNRCHTKEIFFMSGDVAPSEAVNGQAESPQAGVSTEP</sequence>
<organism>
    <name type="scientific">Bos taurus</name>
    <name type="common">Bovine</name>
    <dbReference type="NCBI Taxonomy" id="9913"/>
    <lineage>
        <taxon>Eukaryota</taxon>
        <taxon>Metazoa</taxon>
        <taxon>Chordata</taxon>
        <taxon>Craniata</taxon>
        <taxon>Vertebrata</taxon>
        <taxon>Euteleostomi</taxon>
        <taxon>Mammalia</taxon>
        <taxon>Eutheria</taxon>
        <taxon>Laurasiatheria</taxon>
        <taxon>Artiodactyla</taxon>
        <taxon>Ruminantia</taxon>
        <taxon>Pecora</taxon>
        <taxon>Bovidae</taxon>
        <taxon>Bovinae</taxon>
        <taxon>Bos</taxon>
    </lineage>
</organism>
<proteinExistence type="evidence at transcript level"/>
<evidence type="ECO:0000255" key="1"/>
<evidence type="ECO:0000255" key="2">
    <source>
        <dbReference type="PROSITE-ProRule" id="PRU00521"/>
    </source>
</evidence>
<gene>
    <name type="primary">TACR2</name>
    <name type="synonym">TAC2R</name>
</gene>
<dbReference type="EMBL" id="X06295">
    <property type="protein sequence ID" value="CAA29621.1"/>
    <property type="molecule type" value="mRNA"/>
</dbReference>
<dbReference type="PIR" id="S00516">
    <property type="entry name" value="S00516"/>
</dbReference>
<dbReference type="RefSeq" id="NP_776894.1">
    <property type="nucleotide sequence ID" value="NM_174469.2"/>
</dbReference>
<dbReference type="SMR" id="P05363"/>
<dbReference type="FunCoup" id="P05363">
    <property type="interactions" value="128"/>
</dbReference>
<dbReference type="STRING" id="9913.ENSBTAP00000028870"/>
<dbReference type="BindingDB" id="P05363"/>
<dbReference type="ChEMBL" id="CHEMBL4815"/>
<dbReference type="GlyCosmos" id="P05363">
    <property type="glycosylation" value="2 sites, No reported glycans"/>
</dbReference>
<dbReference type="GlyGen" id="P05363">
    <property type="glycosylation" value="2 sites"/>
</dbReference>
<dbReference type="PaxDb" id="9913-ENSBTAP00000028870"/>
<dbReference type="Ensembl" id="ENSBTAT00000028870.5">
    <property type="protein sequence ID" value="ENSBTAP00000028870.4"/>
    <property type="gene ID" value="ENSBTAG00000021664.7"/>
</dbReference>
<dbReference type="GeneID" id="282088"/>
<dbReference type="KEGG" id="bta:282088"/>
<dbReference type="CTD" id="6865"/>
<dbReference type="VEuPathDB" id="HostDB:ENSBTAG00000021664"/>
<dbReference type="VGNC" id="VGNC:35561">
    <property type="gene designation" value="TACR2"/>
</dbReference>
<dbReference type="eggNOG" id="KOG4219">
    <property type="taxonomic scope" value="Eukaryota"/>
</dbReference>
<dbReference type="GeneTree" id="ENSGT00940000155512"/>
<dbReference type="InParanoid" id="P05363"/>
<dbReference type="OMA" id="RRVNRCH"/>
<dbReference type="OrthoDB" id="5981855at2759"/>
<dbReference type="TreeFam" id="TF315303"/>
<dbReference type="Reactome" id="R-BTA-380095">
    <property type="pathway name" value="Tachykinin receptors bind tachykinins"/>
</dbReference>
<dbReference type="Reactome" id="R-BTA-416476">
    <property type="pathway name" value="G alpha (q) signalling events"/>
</dbReference>
<dbReference type="Proteomes" id="UP000009136">
    <property type="component" value="Chromosome 28"/>
</dbReference>
<dbReference type="Bgee" id="ENSBTAG00000021664">
    <property type="expression patterns" value="Expressed in omasum and 68 other cell types or tissues"/>
</dbReference>
<dbReference type="GO" id="GO:0005886">
    <property type="term" value="C:plasma membrane"/>
    <property type="evidence" value="ECO:0000318"/>
    <property type="project" value="GO_Central"/>
</dbReference>
<dbReference type="GO" id="GO:0061827">
    <property type="term" value="C:sperm head"/>
    <property type="evidence" value="ECO:0007669"/>
    <property type="project" value="Ensembl"/>
</dbReference>
<dbReference type="GO" id="GO:0097225">
    <property type="term" value="C:sperm midpiece"/>
    <property type="evidence" value="ECO:0000318"/>
    <property type="project" value="GO_Central"/>
</dbReference>
<dbReference type="GO" id="GO:0016497">
    <property type="term" value="F:substance K receptor activity"/>
    <property type="evidence" value="ECO:0000318"/>
    <property type="project" value="GO_Central"/>
</dbReference>
<dbReference type="GO" id="GO:1902093">
    <property type="term" value="P:positive regulation of flagellated sperm motility"/>
    <property type="evidence" value="ECO:0000318"/>
    <property type="project" value="GO_Central"/>
</dbReference>
<dbReference type="GO" id="GO:0070472">
    <property type="term" value="P:regulation of uterine smooth muscle contraction"/>
    <property type="evidence" value="ECO:0007669"/>
    <property type="project" value="Ensembl"/>
</dbReference>
<dbReference type="CDD" id="cd16004">
    <property type="entry name" value="7tmA_SKR_NK2R"/>
    <property type="match status" value="1"/>
</dbReference>
<dbReference type="FunFam" id="1.20.1070.10:FF:000224">
    <property type="entry name" value="Tachykinin receptor 2"/>
    <property type="match status" value="1"/>
</dbReference>
<dbReference type="Gene3D" id="1.20.1070.10">
    <property type="entry name" value="Rhodopsin 7-helix transmembrane proteins"/>
    <property type="match status" value="1"/>
</dbReference>
<dbReference type="InterPro" id="IPR000276">
    <property type="entry name" value="GPCR_Rhodpsn"/>
</dbReference>
<dbReference type="InterPro" id="IPR017452">
    <property type="entry name" value="GPCR_Rhodpsn_7TM"/>
</dbReference>
<dbReference type="InterPro" id="IPR001681">
    <property type="entry name" value="Neurokn_rcpt"/>
</dbReference>
<dbReference type="InterPro" id="IPR000913">
    <property type="entry name" value="NK2_rcpt"/>
</dbReference>
<dbReference type="PANTHER" id="PTHR46925">
    <property type="entry name" value="G-PROTEIN COUPLED RECEPTOR TKR-1-RELATED"/>
    <property type="match status" value="1"/>
</dbReference>
<dbReference type="PANTHER" id="PTHR46925:SF3">
    <property type="entry name" value="SUBSTANCE-K RECEPTOR"/>
    <property type="match status" value="1"/>
</dbReference>
<dbReference type="Pfam" id="PF00001">
    <property type="entry name" value="7tm_1"/>
    <property type="match status" value="1"/>
</dbReference>
<dbReference type="PRINTS" id="PR00237">
    <property type="entry name" value="GPCRRHODOPSN"/>
</dbReference>
<dbReference type="PRINTS" id="PR01025">
    <property type="entry name" value="NEUROKININ2R"/>
</dbReference>
<dbReference type="PRINTS" id="PR00244">
    <property type="entry name" value="NEUROKININR"/>
</dbReference>
<dbReference type="SMART" id="SM01381">
    <property type="entry name" value="7TM_GPCR_Srsx"/>
    <property type="match status" value="1"/>
</dbReference>
<dbReference type="SUPFAM" id="SSF81321">
    <property type="entry name" value="Family A G protein-coupled receptor-like"/>
    <property type="match status" value="1"/>
</dbReference>
<dbReference type="PROSITE" id="PS00237">
    <property type="entry name" value="G_PROTEIN_RECEP_F1_1"/>
    <property type="match status" value="1"/>
</dbReference>
<dbReference type="PROSITE" id="PS50262">
    <property type="entry name" value="G_PROTEIN_RECEP_F1_2"/>
    <property type="match status" value="1"/>
</dbReference>
<protein>
    <recommendedName>
        <fullName>Substance-K receptor</fullName>
        <shortName>SKR</shortName>
    </recommendedName>
    <alternativeName>
        <fullName>NK-2 receptor</fullName>
        <shortName>NK-2R</shortName>
    </alternativeName>
    <alternativeName>
        <fullName>Neurokinin A receptor</fullName>
    </alternativeName>
    <alternativeName>
        <fullName>Tachykinin receptor 2</fullName>
    </alternativeName>
</protein>
<reference key="1">
    <citation type="journal article" date="1987" name="Nature">
        <title>cDNA cloning of bovine substance-K receptor through oocyte expression system.</title>
        <authorList>
            <person name="Masu Y."/>
            <person name="Nakayama K."/>
            <person name="Tamaki H."/>
            <person name="Harada Y."/>
            <person name="Kuno M."/>
            <person name="Nakanishi S."/>
        </authorList>
    </citation>
    <scope>NUCLEOTIDE SEQUENCE [MRNA]</scope>
</reference>
<name>NK2R_BOVIN</name>
<keyword id="KW-1003">Cell membrane</keyword>
<keyword id="KW-1015">Disulfide bond</keyword>
<keyword id="KW-0297">G-protein coupled receptor</keyword>
<keyword id="KW-0325">Glycoprotein</keyword>
<keyword id="KW-0449">Lipoprotein</keyword>
<keyword id="KW-0472">Membrane</keyword>
<keyword id="KW-0564">Palmitate</keyword>
<keyword id="KW-0675">Receptor</keyword>
<keyword id="KW-1185">Reference proteome</keyword>
<keyword id="KW-0807">Transducer</keyword>
<keyword id="KW-0812">Transmembrane</keyword>
<keyword id="KW-1133">Transmembrane helix</keyword>
<comment type="function">
    <text>This is a receptor for the tachykinin neuropeptide substance K (neurokinin A). It is associated with G proteins that activate a phosphatidylinositol-calcium second messenger system. The rank order of affinity of this receptor to tachykinins is: substance K &gt; neuromedin-K &gt; substance P.</text>
</comment>
<comment type="subcellular location">
    <subcellularLocation>
        <location>Cell membrane</location>
        <topology>Multi-pass membrane protein</topology>
    </subcellularLocation>
</comment>
<comment type="similarity">
    <text evidence="2">Belongs to the G-protein coupled receptor 1 family.</text>
</comment>